<gene>
    <name evidence="1" type="primary">rsgA</name>
    <name type="ordered locus">CLI_2564</name>
</gene>
<accession>A7GG89</accession>
<evidence type="ECO:0000255" key="1">
    <source>
        <dbReference type="HAMAP-Rule" id="MF_01820"/>
    </source>
</evidence>
<evidence type="ECO:0000255" key="2">
    <source>
        <dbReference type="PROSITE-ProRule" id="PRU01058"/>
    </source>
</evidence>
<protein>
    <recommendedName>
        <fullName evidence="1">Small ribosomal subunit biogenesis GTPase RsgA</fullName>
        <ecNumber evidence="1">3.6.1.-</ecNumber>
    </recommendedName>
</protein>
<reference key="1">
    <citation type="submission" date="2007-06" db="EMBL/GenBank/DDBJ databases">
        <authorList>
            <person name="Brinkac L.M."/>
            <person name="Daugherty S."/>
            <person name="Dodson R.J."/>
            <person name="Madupu R."/>
            <person name="Brown J.L."/>
            <person name="Bruce D."/>
            <person name="Detter C."/>
            <person name="Munk C."/>
            <person name="Smith L.A."/>
            <person name="Smith T.J."/>
            <person name="White O."/>
            <person name="Brettin T.S."/>
        </authorList>
    </citation>
    <scope>NUCLEOTIDE SEQUENCE [LARGE SCALE GENOMIC DNA]</scope>
    <source>
        <strain>Langeland / NCTC 10281 / Type F</strain>
    </source>
</reference>
<name>RSGA_CLOBL</name>
<comment type="function">
    <text evidence="1">One of several proteins that assist in the late maturation steps of the functional core of the 30S ribosomal subunit. Helps release RbfA from mature subunits. May play a role in the assembly of ribosomal proteins into the subunit. Circularly permuted GTPase that catalyzes slow GTP hydrolysis, GTPase activity is stimulated by the 30S ribosomal subunit.</text>
</comment>
<comment type="cofactor">
    <cofactor evidence="1">
        <name>Zn(2+)</name>
        <dbReference type="ChEBI" id="CHEBI:29105"/>
    </cofactor>
    <text evidence="1">Binds 1 zinc ion per subunit.</text>
</comment>
<comment type="subunit">
    <text evidence="1">Monomer. Associates with 30S ribosomal subunit, binds 16S rRNA.</text>
</comment>
<comment type="subcellular location">
    <subcellularLocation>
        <location evidence="1">Cytoplasm</location>
    </subcellularLocation>
</comment>
<comment type="similarity">
    <text evidence="1">Belongs to the TRAFAC class YlqF/YawG GTPase family. RsgA subfamily.</text>
</comment>
<feature type="chain" id="PRO_1000188051" description="Small ribosomal subunit biogenesis GTPase RsgA">
    <location>
        <begin position="1"/>
        <end position="292"/>
    </location>
</feature>
<feature type="domain" description="CP-type G" evidence="2">
    <location>
        <begin position="64"/>
        <end position="221"/>
    </location>
</feature>
<feature type="binding site" evidence="1">
    <location>
        <begin position="113"/>
        <end position="116"/>
    </location>
    <ligand>
        <name>GTP</name>
        <dbReference type="ChEBI" id="CHEBI:37565"/>
    </ligand>
</feature>
<feature type="binding site" evidence="1">
    <location>
        <begin position="164"/>
        <end position="172"/>
    </location>
    <ligand>
        <name>GTP</name>
        <dbReference type="ChEBI" id="CHEBI:37565"/>
    </ligand>
</feature>
<feature type="binding site" evidence="1">
    <location>
        <position position="245"/>
    </location>
    <ligand>
        <name>Zn(2+)</name>
        <dbReference type="ChEBI" id="CHEBI:29105"/>
    </ligand>
</feature>
<feature type="binding site" evidence="1">
    <location>
        <position position="250"/>
    </location>
    <ligand>
        <name>Zn(2+)</name>
        <dbReference type="ChEBI" id="CHEBI:29105"/>
    </ligand>
</feature>
<feature type="binding site" evidence="1">
    <location>
        <position position="252"/>
    </location>
    <ligand>
        <name>Zn(2+)</name>
        <dbReference type="ChEBI" id="CHEBI:29105"/>
    </ligand>
</feature>
<feature type="binding site" evidence="1">
    <location>
        <position position="258"/>
    </location>
    <ligand>
        <name>Zn(2+)</name>
        <dbReference type="ChEBI" id="CHEBI:29105"/>
    </ligand>
</feature>
<keyword id="KW-0963">Cytoplasm</keyword>
<keyword id="KW-0342">GTP-binding</keyword>
<keyword id="KW-0378">Hydrolase</keyword>
<keyword id="KW-0479">Metal-binding</keyword>
<keyword id="KW-0547">Nucleotide-binding</keyword>
<keyword id="KW-0690">Ribosome biogenesis</keyword>
<keyword id="KW-0694">RNA-binding</keyword>
<keyword id="KW-0699">rRNA-binding</keyword>
<keyword id="KW-0862">Zinc</keyword>
<organism>
    <name type="scientific">Clostridium botulinum (strain Langeland / NCTC 10281 / Type F)</name>
    <dbReference type="NCBI Taxonomy" id="441772"/>
    <lineage>
        <taxon>Bacteria</taxon>
        <taxon>Bacillati</taxon>
        <taxon>Bacillota</taxon>
        <taxon>Clostridia</taxon>
        <taxon>Eubacteriales</taxon>
        <taxon>Clostridiaceae</taxon>
        <taxon>Clostridium</taxon>
    </lineage>
</organism>
<dbReference type="EC" id="3.6.1.-" evidence="1"/>
<dbReference type="EMBL" id="CP000728">
    <property type="protein sequence ID" value="ABS41056.1"/>
    <property type="molecule type" value="Genomic_DNA"/>
</dbReference>
<dbReference type="RefSeq" id="WP_003402164.1">
    <property type="nucleotide sequence ID" value="NC_009699.1"/>
</dbReference>
<dbReference type="SMR" id="A7GG89"/>
<dbReference type="KEGG" id="cbf:CLI_2564"/>
<dbReference type="HOGENOM" id="CLU_033617_2_1_9"/>
<dbReference type="Proteomes" id="UP000002410">
    <property type="component" value="Chromosome"/>
</dbReference>
<dbReference type="GO" id="GO:0005737">
    <property type="term" value="C:cytoplasm"/>
    <property type="evidence" value="ECO:0007669"/>
    <property type="project" value="UniProtKB-SubCell"/>
</dbReference>
<dbReference type="GO" id="GO:0005525">
    <property type="term" value="F:GTP binding"/>
    <property type="evidence" value="ECO:0007669"/>
    <property type="project" value="UniProtKB-UniRule"/>
</dbReference>
<dbReference type="GO" id="GO:0003924">
    <property type="term" value="F:GTPase activity"/>
    <property type="evidence" value="ECO:0007669"/>
    <property type="project" value="UniProtKB-UniRule"/>
</dbReference>
<dbReference type="GO" id="GO:0046872">
    <property type="term" value="F:metal ion binding"/>
    <property type="evidence" value="ECO:0007669"/>
    <property type="project" value="UniProtKB-KW"/>
</dbReference>
<dbReference type="GO" id="GO:0019843">
    <property type="term" value="F:rRNA binding"/>
    <property type="evidence" value="ECO:0007669"/>
    <property type="project" value="UniProtKB-KW"/>
</dbReference>
<dbReference type="GO" id="GO:0042274">
    <property type="term" value="P:ribosomal small subunit biogenesis"/>
    <property type="evidence" value="ECO:0007669"/>
    <property type="project" value="UniProtKB-UniRule"/>
</dbReference>
<dbReference type="CDD" id="cd04466">
    <property type="entry name" value="S1_YloQ_GTPase"/>
    <property type="match status" value="1"/>
</dbReference>
<dbReference type="CDD" id="cd01854">
    <property type="entry name" value="YjeQ_EngC"/>
    <property type="match status" value="1"/>
</dbReference>
<dbReference type="Gene3D" id="2.40.50.140">
    <property type="entry name" value="Nucleic acid-binding proteins"/>
    <property type="match status" value="1"/>
</dbReference>
<dbReference type="Gene3D" id="3.40.50.300">
    <property type="entry name" value="P-loop containing nucleotide triphosphate hydrolases"/>
    <property type="match status" value="1"/>
</dbReference>
<dbReference type="Gene3D" id="1.10.40.50">
    <property type="entry name" value="Probable gtpase engc, domain 3"/>
    <property type="match status" value="1"/>
</dbReference>
<dbReference type="HAMAP" id="MF_01820">
    <property type="entry name" value="GTPase_RsgA"/>
    <property type="match status" value="1"/>
</dbReference>
<dbReference type="InterPro" id="IPR030378">
    <property type="entry name" value="G_CP_dom"/>
</dbReference>
<dbReference type="InterPro" id="IPR012340">
    <property type="entry name" value="NA-bd_OB-fold"/>
</dbReference>
<dbReference type="InterPro" id="IPR027417">
    <property type="entry name" value="P-loop_NTPase"/>
</dbReference>
<dbReference type="InterPro" id="IPR004881">
    <property type="entry name" value="Ribosome_biogen_GTPase_RsgA"/>
</dbReference>
<dbReference type="InterPro" id="IPR010914">
    <property type="entry name" value="RsgA_GTPase_dom"/>
</dbReference>
<dbReference type="InterPro" id="IPR031944">
    <property type="entry name" value="RsgA_N"/>
</dbReference>
<dbReference type="NCBIfam" id="TIGR00157">
    <property type="entry name" value="ribosome small subunit-dependent GTPase A"/>
    <property type="match status" value="1"/>
</dbReference>
<dbReference type="PANTHER" id="PTHR32120">
    <property type="entry name" value="SMALL RIBOSOMAL SUBUNIT BIOGENESIS GTPASE RSGA"/>
    <property type="match status" value="1"/>
</dbReference>
<dbReference type="PANTHER" id="PTHR32120:SF11">
    <property type="entry name" value="SMALL RIBOSOMAL SUBUNIT BIOGENESIS GTPASE RSGA 1, MITOCHONDRIAL-RELATED"/>
    <property type="match status" value="1"/>
</dbReference>
<dbReference type="Pfam" id="PF03193">
    <property type="entry name" value="RsgA_GTPase"/>
    <property type="match status" value="1"/>
</dbReference>
<dbReference type="Pfam" id="PF16745">
    <property type="entry name" value="RsgA_N"/>
    <property type="match status" value="1"/>
</dbReference>
<dbReference type="SUPFAM" id="SSF50249">
    <property type="entry name" value="Nucleic acid-binding proteins"/>
    <property type="match status" value="1"/>
</dbReference>
<dbReference type="SUPFAM" id="SSF52540">
    <property type="entry name" value="P-loop containing nucleoside triphosphate hydrolases"/>
    <property type="match status" value="1"/>
</dbReference>
<dbReference type="PROSITE" id="PS50936">
    <property type="entry name" value="ENGC_GTPASE"/>
    <property type="match status" value="1"/>
</dbReference>
<dbReference type="PROSITE" id="PS51721">
    <property type="entry name" value="G_CP"/>
    <property type="match status" value="1"/>
</dbReference>
<sequence>MKGTIIKGIGGFYYIKIDNSEEIIECKARGKFRHTELTPMIGDYVEISIDKNNKGAIEKIYERRSELFRPAVANVTQALVVFSFKNPDINIDLLNKFLLLCEYNNLKAIVCFNKMDLVNKEDYKDIISMIEQAGYDIIFLNAEKERNMDIIKKLIKDNVTVFCGPSGVGKSTMLNKIIGKETMITGNISEKLKRGKHTTRHSELIYVDEGLLVDTPGFSSLDINFMEKEDLLHCIPEFRDFIGECKFTGCLHHREPNCAVKKAVEEGHIHKNRYDFYIKTLEEFMNRRKKKW</sequence>
<proteinExistence type="inferred from homology"/>